<comment type="similarity">
    <text evidence="1">Belongs to the universal ribosomal protein uL29 family.</text>
</comment>
<accession>B7J475</accession>
<name>RL29_ACIF2</name>
<feature type="chain" id="PRO_1000121721" description="Large ribosomal subunit protein uL29">
    <location>
        <begin position="1"/>
        <end position="65"/>
    </location>
</feature>
<proteinExistence type="inferred from homology"/>
<sequence length="65" mass="7384">MKAQAVQKLDLAGCQAQLLVLLEEQFRLRMQHATGQLAKTSRLRTVRRDIARVRTAITVKKEAHS</sequence>
<protein>
    <recommendedName>
        <fullName evidence="1">Large ribosomal subunit protein uL29</fullName>
    </recommendedName>
    <alternativeName>
        <fullName evidence="2">50S ribosomal protein L29</fullName>
    </alternativeName>
</protein>
<dbReference type="EMBL" id="CP001219">
    <property type="protein sequence ID" value="ACK80945.1"/>
    <property type="molecule type" value="Genomic_DNA"/>
</dbReference>
<dbReference type="RefSeq" id="WP_009569559.1">
    <property type="nucleotide sequence ID" value="NC_011761.1"/>
</dbReference>
<dbReference type="SMR" id="B7J475"/>
<dbReference type="STRING" id="243159.AFE_0335"/>
<dbReference type="PaxDb" id="243159-AFE_0335"/>
<dbReference type="GeneID" id="65279714"/>
<dbReference type="KEGG" id="afr:AFE_0335"/>
<dbReference type="eggNOG" id="COG0255">
    <property type="taxonomic scope" value="Bacteria"/>
</dbReference>
<dbReference type="HOGENOM" id="CLU_158491_1_0_6"/>
<dbReference type="Proteomes" id="UP000001362">
    <property type="component" value="Chromosome"/>
</dbReference>
<dbReference type="GO" id="GO:1990904">
    <property type="term" value="C:ribonucleoprotein complex"/>
    <property type="evidence" value="ECO:0007669"/>
    <property type="project" value="UniProtKB-KW"/>
</dbReference>
<dbReference type="GO" id="GO:0005840">
    <property type="term" value="C:ribosome"/>
    <property type="evidence" value="ECO:0007669"/>
    <property type="project" value="UniProtKB-KW"/>
</dbReference>
<dbReference type="GO" id="GO:0003735">
    <property type="term" value="F:structural constituent of ribosome"/>
    <property type="evidence" value="ECO:0007669"/>
    <property type="project" value="InterPro"/>
</dbReference>
<dbReference type="GO" id="GO:0006412">
    <property type="term" value="P:translation"/>
    <property type="evidence" value="ECO:0007669"/>
    <property type="project" value="UniProtKB-UniRule"/>
</dbReference>
<dbReference type="CDD" id="cd00427">
    <property type="entry name" value="Ribosomal_L29_HIP"/>
    <property type="match status" value="1"/>
</dbReference>
<dbReference type="Gene3D" id="6.10.140.1970">
    <property type="match status" value="1"/>
</dbReference>
<dbReference type="HAMAP" id="MF_00374">
    <property type="entry name" value="Ribosomal_uL29"/>
    <property type="match status" value="1"/>
</dbReference>
<dbReference type="InterPro" id="IPR001854">
    <property type="entry name" value="Ribosomal_uL29"/>
</dbReference>
<dbReference type="InterPro" id="IPR018254">
    <property type="entry name" value="Ribosomal_uL29_CS"/>
</dbReference>
<dbReference type="InterPro" id="IPR036049">
    <property type="entry name" value="Ribosomal_uL29_sf"/>
</dbReference>
<dbReference type="NCBIfam" id="TIGR00012">
    <property type="entry name" value="L29"/>
    <property type="match status" value="1"/>
</dbReference>
<dbReference type="Pfam" id="PF00831">
    <property type="entry name" value="Ribosomal_L29"/>
    <property type="match status" value="1"/>
</dbReference>
<dbReference type="SUPFAM" id="SSF46561">
    <property type="entry name" value="Ribosomal protein L29 (L29p)"/>
    <property type="match status" value="1"/>
</dbReference>
<dbReference type="PROSITE" id="PS00579">
    <property type="entry name" value="RIBOSOMAL_L29"/>
    <property type="match status" value="1"/>
</dbReference>
<reference key="1">
    <citation type="journal article" date="2008" name="BMC Genomics">
        <title>Acidithiobacillus ferrooxidans metabolism: from genome sequence to industrial applications.</title>
        <authorList>
            <person name="Valdes J."/>
            <person name="Pedroso I."/>
            <person name="Quatrini R."/>
            <person name="Dodson R.J."/>
            <person name="Tettelin H."/>
            <person name="Blake R. II"/>
            <person name="Eisen J.A."/>
            <person name="Holmes D.S."/>
        </authorList>
    </citation>
    <scope>NUCLEOTIDE SEQUENCE [LARGE SCALE GENOMIC DNA]</scope>
    <source>
        <strain>ATCC 23270 / DSM 14882 / CIP 104768 / NCIMB 8455</strain>
    </source>
</reference>
<organism>
    <name type="scientific">Acidithiobacillus ferrooxidans (strain ATCC 23270 / DSM 14882 / CIP 104768 / NCIMB 8455)</name>
    <name type="common">Ferrobacillus ferrooxidans (strain ATCC 23270)</name>
    <dbReference type="NCBI Taxonomy" id="243159"/>
    <lineage>
        <taxon>Bacteria</taxon>
        <taxon>Pseudomonadati</taxon>
        <taxon>Pseudomonadota</taxon>
        <taxon>Acidithiobacillia</taxon>
        <taxon>Acidithiobacillales</taxon>
        <taxon>Acidithiobacillaceae</taxon>
        <taxon>Acidithiobacillus</taxon>
    </lineage>
</organism>
<evidence type="ECO:0000255" key="1">
    <source>
        <dbReference type="HAMAP-Rule" id="MF_00374"/>
    </source>
</evidence>
<evidence type="ECO:0000305" key="2"/>
<gene>
    <name evidence="1" type="primary">rpmC</name>
    <name type="ordered locus">AFE_0335</name>
</gene>
<keyword id="KW-1185">Reference proteome</keyword>
<keyword id="KW-0687">Ribonucleoprotein</keyword>
<keyword id="KW-0689">Ribosomal protein</keyword>